<keyword id="KW-0963">Cytoplasm</keyword>
<keyword id="KW-0489">Methyltransferase</keyword>
<keyword id="KW-1185">Reference proteome</keyword>
<keyword id="KW-0698">rRNA processing</keyword>
<keyword id="KW-0949">S-adenosyl-L-methionine</keyword>
<keyword id="KW-0808">Transferase</keyword>
<sequence>MNQPLQHTTVLLDEAVHALLGDGDAPAGTFVDGTFGRGGHSRLILQRLGPQGRLVAFDKDTEAIQAAARITDARFSIRHQGFSHLGELPAASVSGVLLDLGVSSPQIDDPQRGFSFRFDGPLDMRMDTTRGQSVAEWLADAEAAQIAEVIRDYGEERFAGPIAKAIVARRTERGPISSTAELADIVAGAVKTREPGQNPATRTFQALRIFINAELEELQQALEGSLRVLRPGGRLVVISFHSLEDRIVKQFIAQHSKEVYDRRAPFAPPQPMRLKALERIKPSTDEVAANARARSAVMRVAERTEVPA</sequence>
<dbReference type="EC" id="2.1.1.199" evidence="1"/>
<dbReference type="EMBL" id="CP001392">
    <property type="protein sequence ID" value="ACM34421.1"/>
    <property type="molecule type" value="Genomic_DNA"/>
</dbReference>
<dbReference type="RefSeq" id="WP_015914269.1">
    <property type="nucleotide sequence ID" value="NC_011992.1"/>
</dbReference>
<dbReference type="SMR" id="B9MFS0"/>
<dbReference type="KEGG" id="dia:Dtpsy_2988"/>
<dbReference type="eggNOG" id="COG0275">
    <property type="taxonomic scope" value="Bacteria"/>
</dbReference>
<dbReference type="HOGENOM" id="CLU_038422_2_0_4"/>
<dbReference type="Proteomes" id="UP000000450">
    <property type="component" value="Chromosome"/>
</dbReference>
<dbReference type="GO" id="GO:0005737">
    <property type="term" value="C:cytoplasm"/>
    <property type="evidence" value="ECO:0007669"/>
    <property type="project" value="UniProtKB-SubCell"/>
</dbReference>
<dbReference type="GO" id="GO:0071424">
    <property type="term" value="F:rRNA (cytosine-N4-)-methyltransferase activity"/>
    <property type="evidence" value="ECO:0007669"/>
    <property type="project" value="UniProtKB-UniRule"/>
</dbReference>
<dbReference type="GO" id="GO:0070475">
    <property type="term" value="P:rRNA base methylation"/>
    <property type="evidence" value="ECO:0007669"/>
    <property type="project" value="UniProtKB-UniRule"/>
</dbReference>
<dbReference type="Gene3D" id="1.10.150.170">
    <property type="entry name" value="Putative methyltransferase TM0872, insert domain"/>
    <property type="match status" value="1"/>
</dbReference>
<dbReference type="Gene3D" id="3.40.50.150">
    <property type="entry name" value="Vaccinia Virus protein VP39"/>
    <property type="match status" value="1"/>
</dbReference>
<dbReference type="HAMAP" id="MF_01007">
    <property type="entry name" value="16SrRNA_methyltr_H"/>
    <property type="match status" value="1"/>
</dbReference>
<dbReference type="InterPro" id="IPR002903">
    <property type="entry name" value="RsmH"/>
</dbReference>
<dbReference type="InterPro" id="IPR023397">
    <property type="entry name" value="SAM-dep_MeTrfase_MraW_recog"/>
</dbReference>
<dbReference type="InterPro" id="IPR029063">
    <property type="entry name" value="SAM-dependent_MTases_sf"/>
</dbReference>
<dbReference type="NCBIfam" id="TIGR00006">
    <property type="entry name" value="16S rRNA (cytosine(1402)-N(4))-methyltransferase RsmH"/>
    <property type="match status" value="1"/>
</dbReference>
<dbReference type="PANTHER" id="PTHR11265:SF0">
    <property type="entry name" value="12S RRNA N4-METHYLCYTIDINE METHYLTRANSFERASE"/>
    <property type="match status" value="1"/>
</dbReference>
<dbReference type="PANTHER" id="PTHR11265">
    <property type="entry name" value="S-ADENOSYL-METHYLTRANSFERASE MRAW"/>
    <property type="match status" value="1"/>
</dbReference>
<dbReference type="Pfam" id="PF01795">
    <property type="entry name" value="Methyltransf_5"/>
    <property type="match status" value="1"/>
</dbReference>
<dbReference type="PIRSF" id="PIRSF004486">
    <property type="entry name" value="MraW"/>
    <property type="match status" value="1"/>
</dbReference>
<dbReference type="SUPFAM" id="SSF81799">
    <property type="entry name" value="Putative methyltransferase TM0872, insert domain"/>
    <property type="match status" value="1"/>
</dbReference>
<dbReference type="SUPFAM" id="SSF53335">
    <property type="entry name" value="S-adenosyl-L-methionine-dependent methyltransferases"/>
    <property type="match status" value="1"/>
</dbReference>
<proteinExistence type="inferred from homology"/>
<accession>B9MFS0</accession>
<name>RSMH_ACIET</name>
<reference key="1">
    <citation type="submission" date="2009-01" db="EMBL/GenBank/DDBJ databases">
        <title>Complete sequence of Diaphorobacter sp. TPSY.</title>
        <authorList>
            <consortium name="US DOE Joint Genome Institute"/>
            <person name="Lucas S."/>
            <person name="Copeland A."/>
            <person name="Lapidus A."/>
            <person name="Glavina del Rio T."/>
            <person name="Tice H."/>
            <person name="Bruce D."/>
            <person name="Goodwin L."/>
            <person name="Pitluck S."/>
            <person name="Chertkov O."/>
            <person name="Brettin T."/>
            <person name="Detter J.C."/>
            <person name="Han C."/>
            <person name="Larimer F."/>
            <person name="Land M."/>
            <person name="Hauser L."/>
            <person name="Kyrpides N."/>
            <person name="Mikhailova N."/>
            <person name="Coates J.D."/>
        </authorList>
    </citation>
    <scope>NUCLEOTIDE SEQUENCE [LARGE SCALE GENOMIC DNA]</scope>
    <source>
        <strain>TPSY</strain>
    </source>
</reference>
<feature type="chain" id="PRO_0000386856" description="Ribosomal RNA small subunit methyltransferase H">
    <location>
        <begin position="1"/>
        <end position="308"/>
    </location>
</feature>
<feature type="binding site" evidence="1">
    <location>
        <begin position="38"/>
        <end position="40"/>
    </location>
    <ligand>
        <name>S-adenosyl-L-methionine</name>
        <dbReference type="ChEBI" id="CHEBI:59789"/>
    </ligand>
</feature>
<feature type="binding site" evidence="1">
    <location>
        <position position="58"/>
    </location>
    <ligand>
        <name>S-adenosyl-L-methionine</name>
        <dbReference type="ChEBI" id="CHEBI:59789"/>
    </ligand>
</feature>
<feature type="binding site" evidence="1">
    <location>
        <position position="82"/>
    </location>
    <ligand>
        <name>S-adenosyl-L-methionine</name>
        <dbReference type="ChEBI" id="CHEBI:59789"/>
    </ligand>
</feature>
<feature type="binding site" evidence="1">
    <location>
        <position position="99"/>
    </location>
    <ligand>
        <name>S-adenosyl-L-methionine</name>
        <dbReference type="ChEBI" id="CHEBI:59789"/>
    </ligand>
</feature>
<feature type="binding site" evidence="1">
    <location>
        <position position="106"/>
    </location>
    <ligand>
        <name>S-adenosyl-L-methionine</name>
        <dbReference type="ChEBI" id="CHEBI:59789"/>
    </ligand>
</feature>
<gene>
    <name evidence="1" type="primary">rsmH</name>
    <name type="synonym">mraW</name>
    <name type="ordered locus">Dtpsy_2988</name>
</gene>
<protein>
    <recommendedName>
        <fullName evidence="1">Ribosomal RNA small subunit methyltransferase H</fullName>
        <ecNumber evidence="1">2.1.1.199</ecNumber>
    </recommendedName>
    <alternativeName>
        <fullName evidence="1">16S rRNA m(4)C1402 methyltransferase</fullName>
    </alternativeName>
    <alternativeName>
        <fullName evidence="1">rRNA (cytosine-N(4)-)-methyltransferase RsmH</fullName>
    </alternativeName>
</protein>
<comment type="function">
    <text evidence="1">Specifically methylates the N4 position of cytidine in position 1402 (C1402) of 16S rRNA.</text>
</comment>
<comment type="catalytic activity">
    <reaction evidence="1">
        <text>cytidine(1402) in 16S rRNA + S-adenosyl-L-methionine = N(4)-methylcytidine(1402) in 16S rRNA + S-adenosyl-L-homocysteine + H(+)</text>
        <dbReference type="Rhea" id="RHEA:42928"/>
        <dbReference type="Rhea" id="RHEA-COMP:10286"/>
        <dbReference type="Rhea" id="RHEA-COMP:10287"/>
        <dbReference type="ChEBI" id="CHEBI:15378"/>
        <dbReference type="ChEBI" id="CHEBI:57856"/>
        <dbReference type="ChEBI" id="CHEBI:59789"/>
        <dbReference type="ChEBI" id="CHEBI:74506"/>
        <dbReference type="ChEBI" id="CHEBI:82748"/>
        <dbReference type="EC" id="2.1.1.199"/>
    </reaction>
</comment>
<comment type="subcellular location">
    <subcellularLocation>
        <location evidence="1">Cytoplasm</location>
    </subcellularLocation>
</comment>
<comment type="similarity">
    <text evidence="1">Belongs to the methyltransferase superfamily. RsmH family.</text>
</comment>
<organism>
    <name type="scientific">Acidovorax ebreus (strain TPSY)</name>
    <name type="common">Diaphorobacter sp. (strain TPSY)</name>
    <dbReference type="NCBI Taxonomy" id="535289"/>
    <lineage>
        <taxon>Bacteria</taxon>
        <taxon>Pseudomonadati</taxon>
        <taxon>Pseudomonadota</taxon>
        <taxon>Betaproteobacteria</taxon>
        <taxon>Burkholderiales</taxon>
        <taxon>Comamonadaceae</taxon>
        <taxon>Diaphorobacter</taxon>
    </lineage>
</organism>
<evidence type="ECO:0000255" key="1">
    <source>
        <dbReference type="HAMAP-Rule" id="MF_01007"/>
    </source>
</evidence>